<gene>
    <name evidence="1" type="primary">rnhB</name>
    <name type="ordered locus">ACL_0338</name>
</gene>
<dbReference type="EC" id="3.1.26.4" evidence="1"/>
<dbReference type="EMBL" id="CP000896">
    <property type="protein sequence ID" value="ABX80960.1"/>
    <property type="molecule type" value="Genomic_DNA"/>
</dbReference>
<dbReference type="RefSeq" id="WP_012242291.1">
    <property type="nucleotide sequence ID" value="NC_010163.1"/>
</dbReference>
<dbReference type="SMR" id="A9NF30"/>
<dbReference type="STRING" id="441768.ACL_0338"/>
<dbReference type="GeneID" id="41338523"/>
<dbReference type="KEGG" id="acl:ACL_0338"/>
<dbReference type="eggNOG" id="COG0164">
    <property type="taxonomic scope" value="Bacteria"/>
</dbReference>
<dbReference type="HOGENOM" id="CLU_036532_2_1_14"/>
<dbReference type="OrthoDB" id="9803420at2"/>
<dbReference type="Proteomes" id="UP000008558">
    <property type="component" value="Chromosome"/>
</dbReference>
<dbReference type="GO" id="GO:0005737">
    <property type="term" value="C:cytoplasm"/>
    <property type="evidence" value="ECO:0007669"/>
    <property type="project" value="UniProtKB-SubCell"/>
</dbReference>
<dbReference type="GO" id="GO:0032299">
    <property type="term" value="C:ribonuclease H2 complex"/>
    <property type="evidence" value="ECO:0007669"/>
    <property type="project" value="TreeGrafter"/>
</dbReference>
<dbReference type="GO" id="GO:0030145">
    <property type="term" value="F:manganese ion binding"/>
    <property type="evidence" value="ECO:0007669"/>
    <property type="project" value="UniProtKB-UniRule"/>
</dbReference>
<dbReference type="GO" id="GO:0003723">
    <property type="term" value="F:RNA binding"/>
    <property type="evidence" value="ECO:0007669"/>
    <property type="project" value="InterPro"/>
</dbReference>
<dbReference type="GO" id="GO:0004523">
    <property type="term" value="F:RNA-DNA hybrid ribonuclease activity"/>
    <property type="evidence" value="ECO:0007669"/>
    <property type="project" value="UniProtKB-UniRule"/>
</dbReference>
<dbReference type="GO" id="GO:0043137">
    <property type="term" value="P:DNA replication, removal of RNA primer"/>
    <property type="evidence" value="ECO:0007669"/>
    <property type="project" value="TreeGrafter"/>
</dbReference>
<dbReference type="GO" id="GO:0006298">
    <property type="term" value="P:mismatch repair"/>
    <property type="evidence" value="ECO:0007669"/>
    <property type="project" value="TreeGrafter"/>
</dbReference>
<dbReference type="CDD" id="cd07182">
    <property type="entry name" value="RNase_HII_bacteria_HII_like"/>
    <property type="match status" value="1"/>
</dbReference>
<dbReference type="FunFam" id="3.30.420.10:FF:000006">
    <property type="entry name" value="Ribonuclease HII"/>
    <property type="match status" value="1"/>
</dbReference>
<dbReference type="Gene3D" id="3.30.420.10">
    <property type="entry name" value="Ribonuclease H-like superfamily/Ribonuclease H"/>
    <property type="match status" value="1"/>
</dbReference>
<dbReference type="HAMAP" id="MF_00052_B">
    <property type="entry name" value="RNase_HII_B"/>
    <property type="match status" value="1"/>
</dbReference>
<dbReference type="InterPro" id="IPR022898">
    <property type="entry name" value="RNase_HII"/>
</dbReference>
<dbReference type="InterPro" id="IPR001352">
    <property type="entry name" value="RNase_HII/HIII"/>
</dbReference>
<dbReference type="InterPro" id="IPR024567">
    <property type="entry name" value="RNase_HII/HIII_dom"/>
</dbReference>
<dbReference type="InterPro" id="IPR012337">
    <property type="entry name" value="RNaseH-like_sf"/>
</dbReference>
<dbReference type="InterPro" id="IPR036397">
    <property type="entry name" value="RNaseH_sf"/>
</dbReference>
<dbReference type="NCBIfam" id="NF000594">
    <property type="entry name" value="PRK00015.1-1"/>
    <property type="match status" value="1"/>
</dbReference>
<dbReference type="NCBIfam" id="NF000595">
    <property type="entry name" value="PRK00015.1-3"/>
    <property type="match status" value="1"/>
</dbReference>
<dbReference type="PANTHER" id="PTHR10954">
    <property type="entry name" value="RIBONUCLEASE H2 SUBUNIT A"/>
    <property type="match status" value="1"/>
</dbReference>
<dbReference type="PANTHER" id="PTHR10954:SF18">
    <property type="entry name" value="RIBONUCLEASE HII"/>
    <property type="match status" value="1"/>
</dbReference>
<dbReference type="Pfam" id="PF01351">
    <property type="entry name" value="RNase_HII"/>
    <property type="match status" value="1"/>
</dbReference>
<dbReference type="SUPFAM" id="SSF53098">
    <property type="entry name" value="Ribonuclease H-like"/>
    <property type="match status" value="1"/>
</dbReference>
<dbReference type="PROSITE" id="PS51975">
    <property type="entry name" value="RNASE_H_2"/>
    <property type="match status" value="1"/>
</dbReference>
<evidence type="ECO:0000255" key="1">
    <source>
        <dbReference type="HAMAP-Rule" id="MF_00052"/>
    </source>
</evidence>
<evidence type="ECO:0000255" key="2">
    <source>
        <dbReference type="PROSITE-ProRule" id="PRU01319"/>
    </source>
</evidence>
<sequence length="202" mass="22471">MTIDNLAFEKALYDKGYTYICGVDEAGRGPLAGPVVAAAVIFEKGFYHEDINDSKTLSAKKRETLFELIKQHALAIGVSVVNHEVIDKINILEAARHAMEDAISKLKIKPQYALTDHMDIKGIPYTSIKHGDQLSISIAAASIIAKVTRDKLMVDYDEVYPQYGFKDHKGYGTRKHLEALNLYGVSPIHRKTFAPVAKLLKQ</sequence>
<reference key="1">
    <citation type="journal article" date="2011" name="J. Bacteriol.">
        <title>Complete genome and proteome of Acholeplasma laidlawii.</title>
        <authorList>
            <person name="Lazarev V.N."/>
            <person name="Levitskii S.A."/>
            <person name="Basovskii Y.I."/>
            <person name="Chukin M.M."/>
            <person name="Akopian T.A."/>
            <person name="Vereshchagin V.V."/>
            <person name="Kostrjukova E.S."/>
            <person name="Kovaleva G.Y."/>
            <person name="Kazanov M.D."/>
            <person name="Malko D.B."/>
            <person name="Vitreschak A.G."/>
            <person name="Sernova N.V."/>
            <person name="Gelfand M.S."/>
            <person name="Demina I.A."/>
            <person name="Serebryakova M.V."/>
            <person name="Galyamina M.A."/>
            <person name="Vtyurin N.N."/>
            <person name="Rogov S.I."/>
            <person name="Alexeev D.G."/>
            <person name="Ladygina V.G."/>
            <person name="Govorun V.M."/>
        </authorList>
    </citation>
    <scope>NUCLEOTIDE SEQUENCE [LARGE SCALE GENOMIC DNA]</scope>
    <source>
        <strain>PG-8A</strain>
    </source>
</reference>
<comment type="function">
    <text evidence="1">Endonuclease that specifically degrades the RNA of RNA-DNA hybrids.</text>
</comment>
<comment type="catalytic activity">
    <reaction evidence="1">
        <text>Endonucleolytic cleavage to 5'-phosphomonoester.</text>
        <dbReference type="EC" id="3.1.26.4"/>
    </reaction>
</comment>
<comment type="cofactor">
    <cofactor evidence="1">
        <name>Mn(2+)</name>
        <dbReference type="ChEBI" id="CHEBI:29035"/>
    </cofactor>
    <cofactor evidence="1">
        <name>Mg(2+)</name>
        <dbReference type="ChEBI" id="CHEBI:18420"/>
    </cofactor>
    <text evidence="1">Manganese or magnesium. Binds 1 divalent metal ion per monomer in the absence of substrate. May bind a second metal ion after substrate binding.</text>
</comment>
<comment type="subcellular location">
    <subcellularLocation>
        <location evidence="1">Cytoplasm</location>
    </subcellularLocation>
</comment>
<comment type="similarity">
    <text evidence="1">Belongs to the RNase HII family.</text>
</comment>
<organism>
    <name type="scientific">Acholeplasma laidlawii (strain PG-8A)</name>
    <dbReference type="NCBI Taxonomy" id="441768"/>
    <lineage>
        <taxon>Bacteria</taxon>
        <taxon>Bacillati</taxon>
        <taxon>Mycoplasmatota</taxon>
        <taxon>Mollicutes</taxon>
        <taxon>Acholeplasmatales</taxon>
        <taxon>Acholeplasmataceae</taxon>
        <taxon>Acholeplasma</taxon>
    </lineage>
</organism>
<keyword id="KW-0963">Cytoplasm</keyword>
<keyword id="KW-0255">Endonuclease</keyword>
<keyword id="KW-0378">Hydrolase</keyword>
<keyword id="KW-0464">Manganese</keyword>
<keyword id="KW-0479">Metal-binding</keyword>
<keyword id="KW-0540">Nuclease</keyword>
<keyword id="KW-1185">Reference proteome</keyword>
<accession>A9NF30</accession>
<feature type="chain" id="PRO_0000334850" description="Ribonuclease HII">
    <location>
        <begin position="1"/>
        <end position="202"/>
    </location>
</feature>
<feature type="domain" description="RNase H type-2" evidence="2">
    <location>
        <begin position="18"/>
        <end position="202"/>
    </location>
</feature>
<feature type="binding site" evidence="1">
    <location>
        <position position="24"/>
    </location>
    <ligand>
        <name>a divalent metal cation</name>
        <dbReference type="ChEBI" id="CHEBI:60240"/>
    </ligand>
</feature>
<feature type="binding site" evidence="1">
    <location>
        <position position="25"/>
    </location>
    <ligand>
        <name>a divalent metal cation</name>
        <dbReference type="ChEBI" id="CHEBI:60240"/>
    </ligand>
</feature>
<feature type="binding site" evidence="1">
    <location>
        <position position="116"/>
    </location>
    <ligand>
        <name>a divalent metal cation</name>
        <dbReference type="ChEBI" id="CHEBI:60240"/>
    </ligand>
</feature>
<protein>
    <recommendedName>
        <fullName evidence="1">Ribonuclease HII</fullName>
        <shortName evidence="1">RNase HII</shortName>
        <ecNumber evidence="1">3.1.26.4</ecNumber>
    </recommendedName>
</protein>
<proteinExistence type="inferred from homology"/>
<name>RNH2_ACHLI</name>